<gene>
    <name type="primary">ALG12</name>
    <name type="ORF">PP14673</name>
</gene>
<name>ALG12_HUMAN</name>
<dbReference type="EC" id="2.4.1.260" evidence="2 3 4"/>
<dbReference type="EMBL" id="AJ290427">
    <property type="protein sequence ID" value="CAC83681.1"/>
    <property type="molecule type" value="mRNA"/>
</dbReference>
<dbReference type="EMBL" id="AJ303120">
    <property type="protein sequence ID" value="CAC67488.1"/>
    <property type="molecule type" value="mRNA"/>
</dbReference>
<dbReference type="EMBL" id="AF311904">
    <property type="protein sequence ID" value="AAM94900.1"/>
    <property type="status" value="ALT_FRAME"/>
    <property type="molecule type" value="mRNA"/>
</dbReference>
<dbReference type="EMBL" id="AF318343">
    <property type="protein sequence ID" value="AAL55850.1"/>
    <property type="molecule type" value="mRNA"/>
</dbReference>
<dbReference type="EMBL" id="CR456369">
    <property type="protein sequence ID" value="CAG30255.1"/>
    <property type="molecule type" value="mRNA"/>
</dbReference>
<dbReference type="EMBL" id="AL671710">
    <property type="status" value="NOT_ANNOTATED_CDS"/>
    <property type="molecule type" value="Genomic_DNA"/>
</dbReference>
<dbReference type="EMBL" id="CH471138">
    <property type="protein sequence ID" value="EAW73480.1"/>
    <property type="molecule type" value="Genomic_DNA"/>
</dbReference>
<dbReference type="EMBL" id="BC001729">
    <property type="protein sequence ID" value="AAH01729.1"/>
    <property type="molecule type" value="mRNA"/>
</dbReference>
<dbReference type="EMBL" id="BC098562">
    <property type="protein sequence ID" value="AAH98562.1"/>
    <property type="molecule type" value="mRNA"/>
</dbReference>
<dbReference type="CCDS" id="CCDS14081.1"/>
<dbReference type="RefSeq" id="NP_077010.1">
    <property type="nucleotide sequence ID" value="NM_024105.4"/>
</dbReference>
<dbReference type="BioGRID" id="122535">
    <property type="interactions" value="31"/>
</dbReference>
<dbReference type="FunCoup" id="Q9BV10">
    <property type="interactions" value="1705"/>
</dbReference>
<dbReference type="IntAct" id="Q9BV10">
    <property type="interactions" value="19"/>
</dbReference>
<dbReference type="STRING" id="9606.ENSP00000333813"/>
<dbReference type="CAZy" id="GT22">
    <property type="family name" value="Glycosyltransferase Family 22"/>
</dbReference>
<dbReference type="GlyGen" id="Q9BV10">
    <property type="glycosylation" value="2 sites, 1 N-linked glycan (1 site)"/>
</dbReference>
<dbReference type="iPTMnet" id="Q9BV10"/>
<dbReference type="PhosphoSitePlus" id="Q9BV10"/>
<dbReference type="SwissPalm" id="Q9BV10"/>
<dbReference type="BioMuta" id="ALG12"/>
<dbReference type="DMDM" id="45476971"/>
<dbReference type="jPOST" id="Q9BV10"/>
<dbReference type="MassIVE" id="Q9BV10"/>
<dbReference type="PaxDb" id="9606-ENSP00000333813"/>
<dbReference type="PeptideAtlas" id="Q9BV10"/>
<dbReference type="ProteomicsDB" id="79150"/>
<dbReference type="Pumba" id="Q9BV10"/>
<dbReference type="Antibodypedia" id="28215">
    <property type="antibodies" value="93 antibodies from 22 providers"/>
</dbReference>
<dbReference type="DNASU" id="79087"/>
<dbReference type="Ensembl" id="ENST00000330817.11">
    <property type="protein sequence ID" value="ENSP00000333813.5"/>
    <property type="gene ID" value="ENSG00000182858.14"/>
</dbReference>
<dbReference type="GeneID" id="79087"/>
<dbReference type="KEGG" id="hsa:79087"/>
<dbReference type="MANE-Select" id="ENST00000330817.11">
    <property type="protein sequence ID" value="ENSP00000333813.5"/>
    <property type="RefSeq nucleotide sequence ID" value="NM_024105.4"/>
    <property type="RefSeq protein sequence ID" value="NP_077010.1"/>
</dbReference>
<dbReference type="UCSC" id="uc003biy.4">
    <property type="organism name" value="human"/>
</dbReference>
<dbReference type="AGR" id="HGNC:19358"/>
<dbReference type="CTD" id="79087"/>
<dbReference type="DisGeNET" id="79087"/>
<dbReference type="GeneCards" id="ALG12"/>
<dbReference type="GeneReviews" id="ALG12"/>
<dbReference type="HGNC" id="HGNC:19358">
    <property type="gene designation" value="ALG12"/>
</dbReference>
<dbReference type="HPA" id="ENSG00000182858">
    <property type="expression patterns" value="Low tissue specificity"/>
</dbReference>
<dbReference type="MalaCards" id="ALG12"/>
<dbReference type="MIM" id="607143">
    <property type="type" value="phenotype"/>
</dbReference>
<dbReference type="MIM" id="607144">
    <property type="type" value="gene"/>
</dbReference>
<dbReference type="neXtProt" id="NX_Q9BV10"/>
<dbReference type="OpenTargets" id="ENSG00000182858"/>
<dbReference type="Orphanet" id="79324">
    <property type="disease" value="ALG12-CDG"/>
</dbReference>
<dbReference type="PharmGKB" id="PA134987771"/>
<dbReference type="VEuPathDB" id="HostDB:ENSG00000182858"/>
<dbReference type="eggNOG" id="KOG2516">
    <property type="taxonomic scope" value="Eukaryota"/>
</dbReference>
<dbReference type="GeneTree" id="ENSGT00950000183090"/>
<dbReference type="HOGENOM" id="CLU_008917_0_0_1"/>
<dbReference type="InParanoid" id="Q9BV10"/>
<dbReference type="OMA" id="WWVEVRM"/>
<dbReference type="OrthoDB" id="19039at2759"/>
<dbReference type="PAN-GO" id="Q9BV10">
    <property type="GO annotations" value="3 GO annotations based on evolutionary models"/>
</dbReference>
<dbReference type="PhylomeDB" id="Q9BV10"/>
<dbReference type="TreeFam" id="TF314453"/>
<dbReference type="BRENDA" id="2.4.1.260">
    <property type="organism ID" value="2681"/>
</dbReference>
<dbReference type="PathwayCommons" id="Q9BV10"/>
<dbReference type="Reactome" id="R-HSA-446193">
    <property type="pathway name" value="Biosynthesis of the N-glycan precursor (dolichol lipid-linked oligosaccharide, LLO) and transfer to a nascent protein"/>
</dbReference>
<dbReference type="Reactome" id="R-HSA-4720489">
    <property type="pathway name" value="Defective ALG12 causes CDG-1g"/>
</dbReference>
<dbReference type="SignaLink" id="Q9BV10"/>
<dbReference type="UniPathway" id="UPA00378"/>
<dbReference type="BioGRID-ORCS" id="79087">
    <property type="hits" value="84 hits in 1153 CRISPR screens"/>
</dbReference>
<dbReference type="ChiTaRS" id="ALG12">
    <property type="organism name" value="human"/>
</dbReference>
<dbReference type="GeneWiki" id="ALG12"/>
<dbReference type="GenomeRNAi" id="79087"/>
<dbReference type="Pharos" id="Q9BV10">
    <property type="development level" value="Tbio"/>
</dbReference>
<dbReference type="PRO" id="PR:Q9BV10"/>
<dbReference type="Proteomes" id="UP000005640">
    <property type="component" value="Chromosome 22"/>
</dbReference>
<dbReference type="RNAct" id="Q9BV10">
    <property type="molecule type" value="protein"/>
</dbReference>
<dbReference type="Bgee" id="ENSG00000182858">
    <property type="expression patterns" value="Expressed in right lobe of thyroid gland and 152 other cell types or tissues"/>
</dbReference>
<dbReference type="ExpressionAtlas" id="Q9BV10">
    <property type="expression patterns" value="baseline and differential"/>
</dbReference>
<dbReference type="GO" id="GO:0005783">
    <property type="term" value="C:endoplasmic reticulum"/>
    <property type="evidence" value="ECO:0000303"/>
    <property type="project" value="UniProtKB"/>
</dbReference>
<dbReference type="GO" id="GO:0005789">
    <property type="term" value="C:endoplasmic reticulum membrane"/>
    <property type="evidence" value="ECO:0000318"/>
    <property type="project" value="GO_Central"/>
</dbReference>
<dbReference type="GO" id="GO:0098553">
    <property type="term" value="C:lumenal side of endoplasmic reticulum membrane"/>
    <property type="evidence" value="ECO:0000305"/>
    <property type="project" value="UniProt"/>
</dbReference>
<dbReference type="GO" id="GO:0016020">
    <property type="term" value="C:membrane"/>
    <property type="evidence" value="ECO:0007005"/>
    <property type="project" value="UniProtKB"/>
</dbReference>
<dbReference type="GO" id="GO:0000009">
    <property type="term" value="F:alpha-1,6-mannosyltransferase activity"/>
    <property type="evidence" value="ECO:0000318"/>
    <property type="project" value="GO_Central"/>
</dbReference>
<dbReference type="GO" id="GO:0052917">
    <property type="term" value="F:dolichyl-P-Man:Man(7)GlcNAc(2)-PP-dolichol alpha-1,6-mannosyltransferase"/>
    <property type="evidence" value="ECO:0000315"/>
    <property type="project" value="UniProtKB"/>
</dbReference>
<dbReference type="GO" id="GO:0000030">
    <property type="term" value="F:mannosyltransferase activity"/>
    <property type="evidence" value="ECO:0000304"/>
    <property type="project" value="Reactome"/>
</dbReference>
<dbReference type="GO" id="GO:0006488">
    <property type="term" value="P:dolichol-linked oligosaccharide biosynthetic process"/>
    <property type="evidence" value="ECO:0000314"/>
    <property type="project" value="MGI"/>
</dbReference>
<dbReference type="GO" id="GO:0006457">
    <property type="term" value="P:protein folding"/>
    <property type="evidence" value="ECO:0000303"/>
    <property type="project" value="UniProtKB"/>
</dbReference>
<dbReference type="GO" id="GO:0006487">
    <property type="term" value="P:protein N-linked glycosylation"/>
    <property type="evidence" value="ECO:0000315"/>
    <property type="project" value="UniProtKB"/>
</dbReference>
<dbReference type="InterPro" id="IPR005599">
    <property type="entry name" value="GPI_mannosylTrfase"/>
</dbReference>
<dbReference type="PANTHER" id="PTHR22760:SF1">
    <property type="entry name" value="DOL-P-MAN:MAN(7)GLCNAC(2)-PP-DOL ALPHA-1,6-MANNOSYLTRANSFERASE"/>
    <property type="match status" value="1"/>
</dbReference>
<dbReference type="PANTHER" id="PTHR22760">
    <property type="entry name" value="GLYCOSYLTRANSFERASE"/>
    <property type="match status" value="1"/>
</dbReference>
<dbReference type="Pfam" id="PF03901">
    <property type="entry name" value="Glyco_transf_22"/>
    <property type="match status" value="1"/>
</dbReference>
<comment type="function">
    <text evidence="2 3 4">Mannosyltransferase that operates in the biosynthetic pathway of dolichol-linked oligosaccharides, the glycan precursors employed in protein asparagine (N)-glycosylation. The assembly of dolichol-linked oligosaccharides begins on the cytosolic side of the endoplasmic reticulum membrane and finishes in its lumen. The sequential addition of sugars to dolichol pyrophosphate produces dolichol-linked oligosaccharides containing fourteen sugars, including two GlcNAcs, nine mannoses and three glucoses. Once assembled, the oligosaccharide is transferred from the lipid to nascent proteins by oligosaccharyltransferases. In the lumen of the endoplasmic reticulum, adds the eighth mannose residue in an alpha-1,6 linkage onto Man(7)GlcNAc(2)-PP-dolichol to produce Man(8)GlcNAc(2)-PP-dolichol.</text>
</comment>
<comment type="catalytic activity">
    <reaction evidence="2 3 4">
        <text>an alpha-D-Man-(1-&gt;2)-alpha-D-Man-(1-&gt;2)-alpha-D-Man-(1-&gt;3)-[alpha-D-Man-(1-&gt;2)-alpha-D-Man-(1-&gt;3)-alpha-D-Man-(1-&gt;6)]-beta-D-Man-(1-&gt;4)-beta-D-GlcNAc-(1-&gt;4)-alpha-D-GlcNAc-diphospho-di-trans,poly-cis-dolichol + a di-trans,poly-cis-dolichyl beta-D-mannosyl phosphate = an alpha-D-Man-(1-&gt;2)-alpha-D-Man-(1-&gt;2)-alpha-D-Man-(1-&gt;3)-[alpha-D-Man-(1-&gt;2)-alpha-D-Man-(1-&gt;3)-[alpha-D-Man-(1-&gt;6)]-alpha-D-Man-(1-&gt;6)]-beta-D-Man-(1-&gt;4)-beta-D-GlcNAc-(1-&gt;4)-alpha-D-GlcNAc-diphospho-di-trans,poly-cis-dolichol + a di-trans,poly-cis-dolichyl phosphate + H(+)</text>
        <dbReference type="Rhea" id="RHEA:29535"/>
        <dbReference type="Rhea" id="RHEA-COMP:19498"/>
        <dbReference type="Rhea" id="RHEA-COMP:19501"/>
        <dbReference type="Rhea" id="RHEA-COMP:19518"/>
        <dbReference type="Rhea" id="RHEA-COMP:19519"/>
        <dbReference type="ChEBI" id="CHEBI:15378"/>
        <dbReference type="ChEBI" id="CHEBI:57683"/>
        <dbReference type="ChEBI" id="CHEBI:58211"/>
        <dbReference type="ChEBI" id="CHEBI:132517"/>
        <dbReference type="ChEBI" id="CHEBI:132519"/>
        <dbReference type="EC" id="2.4.1.260"/>
    </reaction>
    <physiologicalReaction direction="left-to-right" evidence="9">
        <dbReference type="Rhea" id="RHEA:29536"/>
    </physiologicalReaction>
</comment>
<comment type="pathway">
    <text evidence="2 3">Protein modification; protein glycosylation.</text>
</comment>
<comment type="subcellular location">
    <subcellularLocation>
        <location evidence="10">Endoplasmic reticulum membrane</location>
        <topology evidence="1">Multi-pass membrane protein</topology>
    </subcellularLocation>
</comment>
<comment type="disease" evidence="2 3 4 5 7">
    <disease id="DI-00339">
        <name>Congenital disorder of glycosylation 1G</name>
        <acronym>CDG1G</acronym>
        <description>A form of congenital disorder of glycosylation, a multisystem disorder caused by a defect in glycoprotein biosynthesis and characterized by under-glycosylated serum glycoproteins. Congenital disorders of glycosylation result in a wide variety of clinical features, such as defects in the nervous system development, psychomotor retardation, dysmorphic features, hypotonia, coagulation disorders, and immunodeficiency. The broad spectrum of features reflects the critical role of N-glycoproteins during embryonic development, differentiation, and maintenance of cell functions.</description>
        <dbReference type="MIM" id="607143"/>
    </disease>
    <text>The disease is caused by variants affecting the gene represented in this entry.</text>
</comment>
<comment type="similarity">
    <text evidence="8">Belongs to the glycosyltransferase 22 family.</text>
</comment>
<comment type="sequence caution" evidence="8">
    <conflict type="frameshift">
        <sequence resource="EMBL-CDS" id="AAM94900"/>
    </conflict>
</comment>
<reference key="1">
    <citation type="journal article" date="2002" name="J. Biol. Chem.">
        <title>Congenital disorders of glycosylation type Ig is defined by a deficiency in dolichyl-P-mannose:Man7GlcNAc2-PP-dolichyl mannosyltransferase.</title>
        <authorList>
            <person name="Chantret I."/>
            <person name="Dupre T."/>
            <person name="Delenda C."/>
            <person name="Bucher S."/>
            <person name="Dancourt J."/>
            <person name="Barnier A."/>
            <person name="Charollais A."/>
            <person name="Heron D."/>
            <person name="Bader-Meunier B."/>
            <person name="Danos O."/>
            <person name="Seta N."/>
            <person name="Durand G."/>
            <person name="Oriol R."/>
            <person name="Codogno P."/>
            <person name="Moore S.E.H."/>
        </authorList>
    </citation>
    <scope>NUCLEOTIDE SEQUENCE [GENOMIC DNA]</scope>
    <scope>VARIANT CDG1G VAL-142</scope>
    <scope>CHARACTERIZATION OF VARIANT CDG1G VAL-142</scope>
    <scope>FUNCTION</scope>
    <scope>CATALYTIC ACTIVITY</scope>
    <scope>PATHWAY</scope>
    <source>
        <tissue>Skin</tissue>
    </source>
</reference>
<reference key="2">
    <citation type="submission" date="2000-10" db="EMBL/GenBank/DDBJ databases">
        <title>Identification of novel membrane proteins.</title>
        <authorList>
            <person name="Zhang W."/>
            <person name="Li N."/>
            <person name="Wan T."/>
            <person name="Cao X."/>
        </authorList>
    </citation>
    <scope>NUCLEOTIDE SEQUENCE [MRNA]</scope>
</reference>
<reference key="3">
    <citation type="journal article" date="2004" name="Proc. Natl. Acad. Sci. U.S.A.">
        <title>Large-scale cDNA transfection screening for genes related to cancer development and progression.</title>
        <authorList>
            <person name="Wan D."/>
            <person name="Gong Y."/>
            <person name="Qin W."/>
            <person name="Zhang P."/>
            <person name="Li J."/>
            <person name="Wei L."/>
            <person name="Zhou X."/>
            <person name="Li H."/>
            <person name="Qiu X."/>
            <person name="Zhong F."/>
            <person name="He L."/>
            <person name="Yu J."/>
            <person name="Yao G."/>
            <person name="Jiang H."/>
            <person name="Qian L."/>
            <person name="Yu Y."/>
            <person name="Shu H."/>
            <person name="Chen X."/>
            <person name="Xu H."/>
            <person name="Guo M."/>
            <person name="Pan Z."/>
            <person name="Chen Y."/>
            <person name="Ge C."/>
            <person name="Yang S."/>
            <person name="Gu J."/>
        </authorList>
    </citation>
    <scope>NUCLEOTIDE SEQUENCE [LARGE SCALE MRNA]</scope>
</reference>
<reference key="4">
    <citation type="journal article" date="2004" name="Genome Biol.">
        <title>A genome annotation-driven approach to cloning the human ORFeome.</title>
        <authorList>
            <person name="Collins J.E."/>
            <person name="Wright C.L."/>
            <person name="Edwards C.A."/>
            <person name="Davis M.P."/>
            <person name="Grinham J.A."/>
            <person name="Cole C.G."/>
            <person name="Goward M.E."/>
            <person name="Aguado B."/>
            <person name="Mallya M."/>
            <person name="Mokrab Y."/>
            <person name="Huckle E.J."/>
            <person name="Beare D.M."/>
            <person name="Dunham I."/>
        </authorList>
    </citation>
    <scope>NUCLEOTIDE SEQUENCE [LARGE SCALE MRNA]</scope>
</reference>
<reference key="5">
    <citation type="journal article" date="1999" name="Nature">
        <title>The DNA sequence of human chromosome 22.</title>
        <authorList>
            <person name="Dunham I."/>
            <person name="Hunt A.R."/>
            <person name="Collins J.E."/>
            <person name="Bruskiewich R."/>
            <person name="Beare D.M."/>
            <person name="Clamp M."/>
            <person name="Smink L.J."/>
            <person name="Ainscough R."/>
            <person name="Almeida J.P."/>
            <person name="Babbage A.K."/>
            <person name="Bagguley C."/>
            <person name="Bailey J."/>
            <person name="Barlow K.F."/>
            <person name="Bates K.N."/>
            <person name="Beasley O.P."/>
            <person name="Bird C.P."/>
            <person name="Blakey S.E."/>
            <person name="Bridgeman A.M."/>
            <person name="Buck D."/>
            <person name="Burgess J."/>
            <person name="Burrill W.D."/>
            <person name="Burton J."/>
            <person name="Carder C."/>
            <person name="Carter N.P."/>
            <person name="Chen Y."/>
            <person name="Clark G."/>
            <person name="Clegg S.M."/>
            <person name="Cobley V.E."/>
            <person name="Cole C.G."/>
            <person name="Collier R.E."/>
            <person name="Connor R."/>
            <person name="Conroy D."/>
            <person name="Corby N.R."/>
            <person name="Coville G.J."/>
            <person name="Cox A.V."/>
            <person name="Davis J."/>
            <person name="Dawson E."/>
            <person name="Dhami P.D."/>
            <person name="Dockree C."/>
            <person name="Dodsworth S.J."/>
            <person name="Durbin R.M."/>
            <person name="Ellington A.G."/>
            <person name="Evans K.L."/>
            <person name="Fey J.M."/>
            <person name="Fleming K."/>
            <person name="French L."/>
            <person name="Garner A.A."/>
            <person name="Gilbert J.G.R."/>
            <person name="Goward M.E."/>
            <person name="Grafham D.V."/>
            <person name="Griffiths M.N.D."/>
            <person name="Hall C."/>
            <person name="Hall R.E."/>
            <person name="Hall-Tamlyn G."/>
            <person name="Heathcott R.W."/>
            <person name="Ho S."/>
            <person name="Holmes S."/>
            <person name="Hunt S.E."/>
            <person name="Jones M.C."/>
            <person name="Kershaw J."/>
            <person name="Kimberley A.M."/>
            <person name="King A."/>
            <person name="Laird G.K."/>
            <person name="Langford C.F."/>
            <person name="Leversha M.A."/>
            <person name="Lloyd C."/>
            <person name="Lloyd D.M."/>
            <person name="Martyn I.D."/>
            <person name="Mashreghi-Mohammadi M."/>
            <person name="Matthews L.H."/>
            <person name="Mccann O.T."/>
            <person name="Mcclay J."/>
            <person name="Mclaren S."/>
            <person name="McMurray A.A."/>
            <person name="Milne S.A."/>
            <person name="Mortimore B.J."/>
            <person name="Odell C.N."/>
            <person name="Pavitt R."/>
            <person name="Pearce A.V."/>
            <person name="Pearson D."/>
            <person name="Phillimore B.J.C.T."/>
            <person name="Phillips S.H."/>
            <person name="Plumb R.W."/>
            <person name="Ramsay H."/>
            <person name="Ramsey Y."/>
            <person name="Rogers L."/>
            <person name="Ross M.T."/>
            <person name="Scott C.E."/>
            <person name="Sehra H.K."/>
            <person name="Skuce C.D."/>
            <person name="Smalley S."/>
            <person name="Smith M.L."/>
            <person name="Soderlund C."/>
            <person name="Spragon L."/>
            <person name="Steward C.A."/>
            <person name="Sulston J.E."/>
            <person name="Swann R.M."/>
            <person name="Vaudin M."/>
            <person name="Wall M."/>
            <person name="Wallis J.M."/>
            <person name="Whiteley M.N."/>
            <person name="Willey D.L."/>
            <person name="Williams L."/>
            <person name="Williams S.A."/>
            <person name="Williamson H."/>
            <person name="Wilmer T.E."/>
            <person name="Wilming L."/>
            <person name="Wright C.L."/>
            <person name="Hubbard T."/>
            <person name="Bentley D.R."/>
            <person name="Beck S."/>
            <person name="Rogers J."/>
            <person name="Shimizu N."/>
            <person name="Minoshima S."/>
            <person name="Kawasaki K."/>
            <person name="Sasaki T."/>
            <person name="Asakawa S."/>
            <person name="Kudoh J."/>
            <person name="Shintani A."/>
            <person name="Shibuya K."/>
            <person name="Yoshizaki Y."/>
            <person name="Aoki N."/>
            <person name="Mitsuyama S."/>
            <person name="Roe B.A."/>
            <person name="Chen F."/>
            <person name="Chu L."/>
            <person name="Crabtree J."/>
            <person name="Deschamps S."/>
            <person name="Do A."/>
            <person name="Do T."/>
            <person name="Dorman A."/>
            <person name="Fang F."/>
            <person name="Fu Y."/>
            <person name="Hu P."/>
            <person name="Hua A."/>
            <person name="Kenton S."/>
            <person name="Lai H."/>
            <person name="Lao H.I."/>
            <person name="Lewis J."/>
            <person name="Lewis S."/>
            <person name="Lin S.-P."/>
            <person name="Loh P."/>
            <person name="Malaj E."/>
            <person name="Nguyen T."/>
            <person name="Pan H."/>
            <person name="Phan S."/>
            <person name="Qi S."/>
            <person name="Qian Y."/>
            <person name="Ray L."/>
            <person name="Ren Q."/>
            <person name="Shaull S."/>
            <person name="Sloan D."/>
            <person name="Song L."/>
            <person name="Wang Q."/>
            <person name="Wang Y."/>
            <person name="Wang Z."/>
            <person name="White J."/>
            <person name="Willingham D."/>
            <person name="Wu H."/>
            <person name="Yao Z."/>
            <person name="Zhan M."/>
            <person name="Zhang G."/>
            <person name="Chissoe S."/>
            <person name="Murray J."/>
            <person name="Miller N."/>
            <person name="Minx P."/>
            <person name="Fulton R."/>
            <person name="Johnson D."/>
            <person name="Bemis G."/>
            <person name="Bentley D."/>
            <person name="Bradshaw H."/>
            <person name="Bourne S."/>
            <person name="Cordes M."/>
            <person name="Du Z."/>
            <person name="Fulton L."/>
            <person name="Goela D."/>
            <person name="Graves T."/>
            <person name="Hawkins J."/>
            <person name="Hinds K."/>
            <person name="Kemp K."/>
            <person name="Latreille P."/>
            <person name="Layman D."/>
            <person name="Ozersky P."/>
            <person name="Rohlfing T."/>
            <person name="Scheet P."/>
            <person name="Walker C."/>
            <person name="Wamsley A."/>
            <person name="Wohldmann P."/>
            <person name="Pepin K."/>
            <person name="Nelson J."/>
            <person name="Korf I."/>
            <person name="Bedell J.A."/>
            <person name="Hillier L.W."/>
            <person name="Mardis E."/>
            <person name="Waterston R."/>
            <person name="Wilson R."/>
            <person name="Emanuel B.S."/>
            <person name="Shaikh T."/>
            <person name="Kurahashi H."/>
            <person name="Saitta S."/>
            <person name="Budarf M.L."/>
            <person name="McDermid H.E."/>
            <person name="Johnson A."/>
            <person name="Wong A.C.C."/>
            <person name="Morrow B.E."/>
            <person name="Edelmann L."/>
            <person name="Kim U.J."/>
            <person name="Shizuya H."/>
            <person name="Simon M.I."/>
            <person name="Dumanski J.P."/>
            <person name="Peyrard M."/>
            <person name="Kedra D."/>
            <person name="Seroussi E."/>
            <person name="Fransson I."/>
            <person name="Tapia I."/>
            <person name="Bruder C.E."/>
            <person name="O'Brien K.P."/>
            <person name="Wilkinson P."/>
            <person name="Bodenteich A."/>
            <person name="Hartman K."/>
            <person name="Hu X."/>
            <person name="Khan A.S."/>
            <person name="Lane L."/>
            <person name="Tilahun Y."/>
            <person name="Wright H."/>
        </authorList>
    </citation>
    <scope>NUCLEOTIDE SEQUENCE [LARGE SCALE GENOMIC DNA]</scope>
</reference>
<reference key="6">
    <citation type="submission" date="2005-07" db="EMBL/GenBank/DDBJ databases">
        <authorList>
            <person name="Mural R.J."/>
            <person name="Istrail S."/>
            <person name="Sutton G.G."/>
            <person name="Florea L."/>
            <person name="Halpern A.L."/>
            <person name="Mobarry C.M."/>
            <person name="Lippert R."/>
            <person name="Walenz B."/>
            <person name="Shatkay H."/>
            <person name="Dew I."/>
            <person name="Miller J.R."/>
            <person name="Flanigan M.J."/>
            <person name="Edwards N.J."/>
            <person name="Bolanos R."/>
            <person name="Fasulo D."/>
            <person name="Halldorsson B.V."/>
            <person name="Hannenhalli S."/>
            <person name="Turner R."/>
            <person name="Yooseph S."/>
            <person name="Lu F."/>
            <person name="Nusskern D.R."/>
            <person name="Shue B.C."/>
            <person name="Zheng X.H."/>
            <person name="Zhong F."/>
            <person name="Delcher A.L."/>
            <person name="Huson D.H."/>
            <person name="Kravitz S.A."/>
            <person name="Mouchard L."/>
            <person name="Reinert K."/>
            <person name="Remington K.A."/>
            <person name="Clark A.G."/>
            <person name="Waterman M.S."/>
            <person name="Eichler E.E."/>
            <person name="Adams M.D."/>
            <person name="Hunkapiller M.W."/>
            <person name="Myers E.W."/>
            <person name="Venter J.C."/>
        </authorList>
    </citation>
    <scope>NUCLEOTIDE SEQUENCE [LARGE SCALE GENOMIC DNA]</scope>
</reference>
<reference key="7">
    <citation type="journal article" date="2004" name="Genome Res.">
        <title>The status, quality, and expansion of the NIH full-length cDNA project: the Mammalian Gene Collection (MGC).</title>
        <authorList>
            <consortium name="The MGC Project Team"/>
        </authorList>
    </citation>
    <scope>NUCLEOTIDE SEQUENCE [LARGE SCALE MRNA]</scope>
    <scope>VARIANT VAL-393</scope>
    <source>
        <tissue>Eye</tissue>
    </source>
</reference>
<reference key="8">
    <citation type="journal article" date="2002" name="Hum. Mol. Genet.">
        <title>ALG12 mannosyltransferase defect in congenital disorder of glycosylation type Ig.</title>
        <authorList>
            <person name="Grubenmann C.E."/>
            <person name="Frank C.G."/>
            <person name="Kjaergaard S."/>
            <person name="Berger E.G."/>
            <person name="Aebi M."/>
            <person name="Hennet T."/>
        </authorList>
    </citation>
    <scope>CHARACTERIZATION OF VARIANTS CDG1G MET-67 AND GLN-146</scope>
    <scope>FUNCTION</scope>
    <scope>CATALYTIC ACTIVITY</scope>
    <scope>SUBCELLULAR LOCATION</scope>
</reference>
<reference key="9">
    <citation type="journal article" date="2002" name="Biochem. J.">
        <title>Deficiency of dolichyl-P-Man:Man7GlcNAc2-PP-dolichyl mannosyltransferase causes congenital disorder of glycosylation type Ig.</title>
        <authorList>
            <person name="Thiel C."/>
            <person name="Schwarz M."/>
            <person name="Hasilik M."/>
            <person name="Grieben U."/>
            <person name="Hanefeld F."/>
            <person name="Lehle L."/>
            <person name="von Figura K."/>
            <person name="Koerner C."/>
        </authorList>
    </citation>
    <scope>VARIANTS CDG1G PRO-158 AND 414-TYR--SER-488 DEL</scope>
    <scope>CHARACTERIZATION OF VARIANT CDG1G PRO-158</scope>
    <scope>FUNCTION</scope>
    <scope>CATALYTIC ACTIVITY</scope>
    <scope>PATHWAY</scope>
</reference>
<reference key="10">
    <citation type="journal article" date="2003" name="Pediatr. Res.">
        <title>Abnormal glycosylation of red cell membrane band 3 in the congenital disorder of glycosylation Ig.</title>
        <authorList>
            <person name="Zdebska E."/>
            <person name="Bader-Meunier B."/>
            <person name="Schischmanoff P.-O."/>
            <person name="Dupre T."/>
            <person name="Seta N."/>
            <person name="Tchernia G."/>
            <person name="Koscielak J."/>
            <person name="Delaunay J."/>
        </authorList>
    </citation>
    <scope>INVOLVEMENT IN CDG1G</scope>
</reference>
<reference key="11">
    <citation type="journal article" date="2007" name="Am. J. Med. Genet. A">
        <title>Expanding spectrum of congenital disorder of glycosylation Ig (CDG-Ig): sibs with a unique skeletal dysplasia, hypogammaglobulinemia, cardiomyopathy, genital malformations, and early lethality.</title>
        <authorList>
            <person name="Kranz C."/>
            <person name="Basinger A.A."/>
            <person name="Guecsavas-Calikoglu M."/>
            <person name="Sun L."/>
            <person name="Powell C.M."/>
            <person name="Henderson F.W."/>
            <person name="Aylsworth A.S."/>
            <person name="Freeze H.H."/>
        </authorList>
    </citation>
    <scope>VARIANTS CDG1G ARG-101 AND GLN-146</scope>
</reference>
<organism>
    <name type="scientific">Homo sapiens</name>
    <name type="common">Human</name>
    <dbReference type="NCBI Taxonomy" id="9606"/>
    <lineage>
        <taxon>Eukaryota</taxon>
        <taxon>Metazoa</taxon>
        <taxon>Chordata</taxon>
        <taxon>Craniata</taxon>
        <taxon>Vertebrata</taxon>
        <taxon>Euteleostomi</taxon>
        <taxon>Mammalia</taxon>
        <taxon>Eutheria</taxon>
        <taxon>Euarchontoglires</taxon>
        <taxon>Primates</taxon>
        <taxon>Haplorrhini</taxon>
        <taxon>Catarrhini</taxon>
        <taxon>Hominidae</taxon>
        <taxon>Homo</taxon>
    </lineage>
</organism>
<evidence type="ECO:0000255" key="1"/>
<evidence type="ECO:0000269" key="2">
    <source>
    </source>
</evidence>
<evidence type="ECO:0000269" key="3">
    <source>
    </source>
</evidence>
<evidence type="ECO:0000269" key="4">
    <source>
    </source>
</evidence>
<evidence type="ECO:0000269" key="5">
    <source>
    </source>
</evidence>
<evidence type="ECO:0000269" key="6">
    <source>
    </source>
</evidence>
<evidence type="ECO:0000269" key="7">
    <source>
    </source>
</evidence>
<evidence type="ECO:0000305" key="8"/>
<evidence type="ECO:0000305" key="9">
    <source>
    </source>
</evidence>
<evidence type="ECO:0000305" key="10">
    <source>
    </source>
</evidence>
<evidence type="ECO:0000312" key="11">
    <source>
        <dbReference type="HGNC" id="HGNC:19358"/>
    </source>
</evidence>
<sequence length="488" mass="54655">MAGKGSSGRRPLLLGLLVAVATVHLVICPYTKVEESFNLQATHDLLYHWQDLEQYDHLEFPGVVPRTFLGPVVIAVFSSPAVYVLSLLEMSKFYSQLIVRGVLGLGVIFGLWTLQKEVRRHFGAMVATMFCWVTAMQFHLMFYCTRTLPNVLALPVVLLALAAWLRHEWARFIWLSAFAIIVFRVELCLFLGLLLLLALGNRKVSVVRALRHAVPAGILCLGLTVAVDSYFWRQLTWPEGKVLWYNTVLNKSSNWGTSPLLWYFYSALPRGLGCSLLFIPLGLVDRRTHAPTVLALGFMALYSLLPHKELRFIIYAFPMLNITAARGCSYLLNNYKKSWLYKAGSLLVIGHLVVNAAYSATALYVSHFNYPGGVAMQRLHQLVPPQTDVLLHIDVAAAQTGVSRFLQVNSAWRYDKREDVQPGTGMLAYTHILMEAAPGLLALYRDTHRVLASVVGTTGVSLNLTQLPPFNVHLQTKLVLLERLPRPS</sequence>
<feature type="chain" id="PRO_0000215781" description="Dol-P-Man:Man(7)GlcNAc(2)-PP-Dol alpha-1,6-mannosyltransferase">
    <location>
        <begin position="1"/>
        <end position="488"/>
    </location>
</feature>
<feature type="transmembrane region" description="Helical" evidence="1">
    <location>
        <begin position="11"/>
        <end position="31"/>
    </location>
</feature>
<feature type="transmembrane region" description="Helical" evidence="1">
    <location>
        <begin position="68"/>
        <end position="88"/>
    </location>
</feature>
<feature type="transmembrane region" description="Helical" evidence="1">
    <location>
        <begin position="93"/>
        <end position="113"/>
    </location>
</feature>
<feature type="transmembrane region" description="Helical" evidence="1">
    <location>
        <begin position="122"/>
        <end position="142"/>
    </location>
</feature>
<feature type="transmembrane region" description="Helical" evidence="1">
    <location>
        <begin position="145"/>
        <end position="165"/>
    </location>
</feature>
<feature type="transmembrane region" description="Helical" evidence="1">
    <location>
        <begin position="177"/>
        <end position="197"/>
    </location>
</feature>
<feature type="transmembrane region" description="Helical" evidence="1">
    <location>
        <begin position="212"/>
        <end position="232"/>
    </location>
</feature>
<feature type="transmembrane region" description="Helical" evidence="1">
    <location>
        <begin position="264"/>
        <end position="284"/>
    </location>
</feature>
<feature type="transmembrane region" description="Helical" evidence="1">
    <location>
        <begin position="290"/>
        <end position="310"/>
    </location>
</feature>
<feature type="transmembrane region" description="Helical" evidence="1">
    <location>
        <begin position="312"/>
        <end position="332"/>
    </location>
</feature>
<feature type="transmembrane region" description="Helical" evidence="1">
    <location>
        <begin position="346"/>
        <end position="366"/>
    </location>
</feature>
<feature type="transmembrane region" description="Helical" evidence="1">
    <location>
        <begin position="423"/>
        <end position="443"/>
    </location>
</feature>
<feature type="sequence variant" id="VAR_017904" description="In CDG1G; loss of function in dolichol-linked oligosaccharide biosynthetic process; dbSNP:rs121907931." evidence="4">
    <original>T</original>
    <variation>M</variation>
    <location>
        <position position="67"/>
    </location>
</feature>
<feature type="sequence variant" id="VAR_038428" description="In CDG1G; dbSNP:rs121907933." evidence="7">
    <original>G</original>
    <variation>R</variation>
    <location>
        <position position="101"/>
    </location>
</feature>
<feature type="sequence variant" id="VAR_017905" description="In CDG1G; loss of dolichyl-P-Man:Man7GlcNAc2-PP-dolichyl mannosyltransferase activity; dbSNP:rs28942090." evidence="2">
    <original>F</original>
    <variation>V</variation>
    <location>
        <position position="142"/>
    </location>
</feature>
<feature type="sequence variant" id="VAR_017906" description="In CDG1G; loss of function in dolichol-linked oligosaccharide biosynthetic process; dbSNP:rs121907932." evidence="4 7">
    <original>R</original>
    <variation>Q</variation>
    <location>
        <position position="146"/>
    </location>
</feature>
<feature type="sequence variant" id="VAR_017907" description="In CDG1G; loss of dolichyl-P-Man:Man7GlcNAc2-PP-dolichyl mannosyltransferase activity; dbSNP:rs121907934." evidence="3">
    <original>L</original>
    <variation>P</variation>
    <location>
        <position position="158"/>
    </location>
</feature>
<feature type="sequence variant" id="VAR_024466" description="In dbSNP:rs3922872." evidence="6">
    <original>I</original>
    <variation>V</variation>
    <location>
        <position position="393"/>
    </location>
</feature>
<feature type="sequence variant" id="VAR_089101" description="In CDG1G." evidence="3">
    <location>
        <begin position="414"/>
        <end position="488"/>
    </location>
</feature>
<feature type="sequence conflict" description="In Ref. 2; AAM94900." evidence="8" ref="2">
    <original>A</original>
    <variation>T</variation>
    <location>
        <position position="267"/>
    </location>
</feature>
<proteinExistence type="evidence at protein level"/>
<accession>Q9BV10</accession>
<accession>A6PWM1</accession>
<accession>Q4KMH4</accession>
<accession>Q8NG10</accession>
<accession>Q96AA4</accession>
<protein>
    <recommendedName>
        <fullName evidence="9">Dol-P-Man:Man(7)GlcNAc(2)-PP-Dol alpha-1,6-mannosyltransferase</fullName>
        <ecNumber evidence="2 3 4">2.4.1.260</ecNumber>
    </recommendedName>
    <alternativeName>
        <fullName evidence="11">Asparagine-linked glycosylation protein 12 homolog</fullName>
        <shortName>hALG12</shortName>
    </alternativeName>
    <alternativeName>
        <fullName>Dolichyl-P-Man:Man(7)GlcNAc(2)-PP-dolichyl-alpha-1,6-mannosyltransferase</fullName>
    </alternativeName>
    <alternativeName>
        <fullName>Mannosyltransferase ALG12 homolog</fullName>
    </alternativeName>
    <alternativeName>
        <fullName>Membrane protein SB87</fullName>
    </alternativeName>
</protein>
<keyword id="KW-0900">Congenital disorder of glycosylation</keyword>
<keyword id="KW-0225">Disease variant</keyword>
<keyword id="KW-0256">Endoplasmic reticulum</keyword>
<keyword id="KW-0328">Glycosyltransferase</keyword>
<keyword id="KW-0472">Membrane</keyword>
<keyword id="KW-1267">Proteomics identification</keyword>
<keyword id="KW-1185">Reference proteome</keyword>
<keyword id="KW-0808">Transferase</keyword>
<keyword id="KW-0812">Transmembrane</keyword>
<keyword id="KW-1133">Transmembrane helix</keyword>